<accession>P40963</accession>
<accession>D6VZV0</accession>
<organism>
    <name type="scientific">Saccharomyces cerevisiae (strain ATCC 204508 / S288c)</name>
    <name type="common">Baker's yeast</name>
    <dbReference type="NCBI Taxonomy" id="559292"/>
    <lineage>
        <taxon>Eukaryota</taxon>
        <taxon>Fungi</taxon>
        <taxon>Dikarya</taxon>
        <taxon>Ascomycota</taxon>
        <taxon>Saccharomycotina</taxon>
        <taxon>Saccharomycetes</taxon>
        <taxon>Saccharomycetales</taxon>
        <taxon>Saccharomycetaceae</taxon>
        <taxon>Saccharomyces</taxon>
    </lineage>
</organism>
<reference key="1">
    <citation type="journal article" date="1997" name="Genetics">
        <title>The role of Sas2, an acetyltransferase homologue of Saccharomyces cerevisiae, in silencing and ORC function.</title>
        <authorList>
            <person name="Ehrenhofer-Murray A.E."/>
            <person name="Rivier D.H."/>
            <person name="Rine J."/>
        </authorList>
    </citation>
    <scope>NUCLEOTIDE SEQUENCE [GENOMIC DNA]</scope>
</reference>
<reference key="2">
    <citation type="journal article" date="1997" name="Nature">
        <title>The nucleotide sequence of Saccharomyces cerevisiae chromosome XIII.</title>
        <authorList>
            <person name="Bowman S."/>
            <person name="Churcher C.M."/>
            <person name="Badcock K."/>
            <person name="Brown D."/>
            <person name="Chillingworth T."/>
            <person name="Connor R."/>
            <person name="Dedman K."/>
            <person name="Devlin K."/>
            <person name="Gentles S."/>
            <person name="Hamlin N."/>
            <person name="Hunt S."/>
            <person name="Jagels K."/>
            <person name="Lye G."/>
            <person name="Moule S."/>
            <person name="Odell C."/>
            <person name="Pearson D."/>
            <person name="Rajandream M.A."/>
            <person name="Rice P."/>
            <person name="Skelton J."/>
            <person name="Walsh S.V."/>
            <person name="Whitehead S."/>
            <person name="Barrell B.G."/>
        </authorList>
    </citation>
    <scope>NUCLEOTIDE SEQUENCE [LARGE SCALE GENOMIC DNA]</scope>
    <source>
        <strain>ATCC 204508 / S288c</strain>
    </source>
</reference>
<reference key="3">
    <citation type="journal article" date="2014" name="G3 (Bethesda)">
        <title>The reference genome sequence of Saccharomyces cerevisiae: Then and now.</title>
        <authorList>
            <person name="Engel S.R."/>
            <person name="Dietrich F.S."/>
            <person name="Fisk D.G."/>
            <person name="Binkley G."/>
            <person name="Balakrishnan R."/>
            <person name="Costanzo M.C."/>
            <person name="Dwight S.S."/>
            <person name="Hitz B.C."/>
            <person name="Karra K."/>
            <person name="Nash R.S."/>
            <person name="Weng S."/>
            <person name="Wong E.D."/>
            <person name="Lloyd P."/>
            <person name="Skrzypek M.S."/>
            <person name="Miyasato S.R."/>
            <person name="Simison M."/>
            <person name="Cherry J.M."/>
        </authorList>
    </citation>
    <scope>GENOME REANNOTATION</scope>
    <source>
        <strain>ATCC 204508 / S288c</strain>
    </source>
</reference>
<reference key="4">
    <citation type="journal article" date="1996" name="Nat. Genet.">
        <title>Yeast SAS silencing genes and human genes associated with AML and HIV-1 Tat interactions are homologous with acetyltransferases.</title>
        <authorList>
            <person name="Reifsnyder C."/>
            <person name="Lowell J."/>
            <person name="Clarke A."/>
            <person name="Pillus L."/>
        </authorList>
    </citation>
    <scope>CHARACTERIZATION</scope>
</reference>
<reference key="5">
    <citation type="journal article" date="1997" name="Nat. Genet.">
        <authorList>
            <person name="Reifsnyder C."/>
            <person name="Lowell J."/>
            <person name="Clarke A."/>
            <person name="Pillus L."/>
        </authorList>
    </citation>
    <scope>ERRATUM OF PUBMED:8782818</scope>
</reference>
<reference key="6">
    <citation type="journal article" date="2001" name="Genes Dev.">
        <title>The yeast SAS (something about silencing) protein complex contains a MYST-type putative acetyltransferase and functions with chromatin assembly factor ASF1.</title>
        <authorList>
            <person name="Osada S."/>
            <person name="Sutton A."/>
            <person name="Muster N."/>
            <person name="Brown C.E."/>
            <person name="Yates J.R. III"/>
            <person name="Sternglanz R."/>
            <person name="Workman J.L."/>
        </authorList>
    </citation>
    <scope>IDENTIFICATION BY MASS SPECTROMETRY</scope>
    <scope>COMPONENT OF THE SAS COMPLEX WITH SAS2 AND SAS5</scope>
    <scope>MUTAGENESIS OF 216-GLN-ARG-217; 219-GLY--GLY-221 AND 224-LEU-ILE-225</scope>
</reference>
<reference key="7">
    <citation type="journal article" date="2001" name="Genes Dev.">
        <title>The silencing complex SAS-I links histone acetylation to the assembly of repressed chromatin by CAF-I and Asf1 in Saccharomyces cerevisiae.</title>
        <authorList>
            <person name="Meijsing S.H."/>
            <person name="Ehrenhofer-Murray A.E."/>
        </authorList>
    </citation>
    <scope>COMPONENT OF THE SAS COMPLEX WITH SAS2 AND SAS5</scope>
    <scope>INTERACTION WITH CAC1</scope>
    <scope>MUTAGENESIS OF CYS-106 AND 213-PRO-PRO-214</scope>
</reference>
<reference key="8">
    <citation type="journal article" date="2003" name="J. Biol. Chem.">
        <title>Sas4 and Sas5 are required for the histone acetyltransferase activity of Sas2 in the SAS complex.</title>
        <authorList>
            <person name="Sutton A."/>
            <person name="Shia W.-J."/>
            <person name="Band D."/>
            <person name="Kaufman P.D."/>
            <person name="Osada S."/>
            <person name="Workman J.L."/>
            <person name="Sternglanz R."/>
        </authorList>
    </citation>
    <scope>FUNCTION OF THE SAS COMPLEX</scope>
</reference>
<reference key="9">
    <citation type="journal article" date="2003" name="Nature">
        <title>Global analysis of protein localization in budding yeast.</title>
        <authorList>
            <person name="Huh W.-K."/>
            <person name="Falvo J.V."/>
            <person name="Gerke L.C."/>
            <person name="Carroll A.S."/>
            <person name="Howson R.W."/>
            <person name="Weissman J.S."/>
            <person name="O'Shea E.K."/>
        </authorList>
    </citation>
    <scope>SUBCELLULAR LOCATION [LARGE SCALE ANALYSIS]</scope>
</reference>
<reference key="10">
    <citation type="journal article" date="2005" name="Genetics">
        <title>Multiple bromodomain genes are involved in restricting the spread of heterochromatic silencing at the Saccharomyces cerevisiae HMR-tRNA boundary.</title>
        <authorList>
            <person name="Jambunathan N."/>
            <person name="Martinez A.W."/>
            <person name="Robert E.C."/>
            <person name="Agochukwu N.B."/>
            <person name="Ibos M.E."/>
            <person name="Dugas S.L."/>
            <person name="Donze D."/>
        </authorList>
    </citation>
    <scope>DISRUPTION PHENOTYPE</scope>
</reference>
<reference key="11">
    <citation type="journal article" date="2008" name="Mol. Cell. Proteomics">
        <title>A multidimensional chromatography technology for in-depth phosphoproteome analysis.</title>
        <authorList>
            <person name="Albuquerque C.P."/>
            <person name="Smolka M.B."/>
            <person name="Payne S.H."/>
            <person name="Bafna V."/>
            <person name="Eng J."/>
            <person name="Zhou H."/>
        </authorList>
    </citation>
    <scope>IDENTIFICATION BY MASS SPECTROMETRY [LARGE SCALE ANALYSIS]</scope>
</reference>
<reference key="12">
    <citation type="journal article" date="2012" name="EMBO J.">
        <title>MYST protein acetyltransferase activity requires active site lysine autoacetylation.</title>
        <authorList>
            <person name="Yuan H."/>
            <person name="Rossetto D."/>
            <person name="Mellert H."/>
            <person name="Dang W."/>
            <person name="Srinivasan M."/>
            <person name="Johnson J."/>
            <person name="Hodawadekar S."/>
            <person name="Ding E.C."/>
            <person name="Speicher K."/>
            <person name="Abshiru N."/>
            <person name="Perry R."/>
            <person name="Wu J."/>
            <person name="Yang C."/>
            <person name="Zheng Y.G."/>
            <person name="Speicher D.W."/>
            <person name="Thibault P."/>
            <person name="Verreault A."/>
            <person name="Johnson F.B."/>
            <person name="Berger S.L."/>
            <person name="Sternglanz R."/>
            <person name="McMahon S.B."/>
            <person name="Cote J."/>
            <person name="Marmorstein R."/>
        </authorList>
    </citation>
    <scope>CATALYTIC ACTIVITY</scope>
    <scope>FUNCTION</scope>
    <scope>SUBUNIT</scope>
    <scope>ACETYLATION AT LYS-168</scope>
    <scope>MUTAGENESIS OF LYS-168</scope>
</reference>
<protein>
    <recommendedName>
        <fullName>Histone acetyltransferase SAS2</fullName>
        <ecNumber evidence="9">2.3.1.48</ecNumber>
    </recommendedName>
    <alternativeName>
        <fullName>Something about silencing protein 2</fullName>
    </alternativeName>
</protein>
<evidence type="ECO:0000250" key="1">
    <source>
        <dbReference type="UniProtKB" id="Q9H7Z6"/>
    </source>
</evidence>
<evidence type="ECO:0000255" key="2">
    <source>
        <dbReference type="PROSITE-ProRule" id="PRU01063"/>
    </source>
</evidence>
<evidence type="ECO:0000256" key="3">
    <source>
        <dbReference type="SAM" id="MobiDB-lite"/>
    </source>
</evidence>
<evidence type="ECO:0000269" key="4">
    <source>
    </source>
</evidence>
<evidence type="ECO:0000269" key="5">
    <source>
    </source>
</evidence>
<evidence type="ECO:0000269" key="6">
    <source>
    </source>
</evidence>
<evidence type="ECO:0000269" key="7">
    <source>
    </source>
</evidence>
<evidence type="ECO:0000269" key="8">
    <source>
    </source>
</evidence>
<evidence type="ECO:0000269" key="9">
    <source>
    </source>
</evidence>
<evidence type="ECO:0000303" key="10">
    <source>
    </source>
</evidence>
<evidence type="ECO:0000305" key="11"/>
<feature type="chain" id="PRO_0000051578" description="Histone acetyltransferase SAS2">
    <location>
        <begin position="1"/>
        <end position="338"/>
    </location>
</feature>
<feature type="domain" description="MYST-type HAT" evidence="2">
    <location>
        <begin position="45"/>
        <end position="338"/>
    </location>
</feature>
<feature type="zinc finger region" description="C2HC MYST-type" evidence="2">
    <location>
        <begin position="100"/>
        <end position="126"/>
    </location>
</feature>
<feature type="region of interest" description="Disordered" evidence="3">
    <location>
        <begin position="1"/>
        <end position="31"/>
    </location>
</feature>
<feature type="compositionally biased region" description="Polar residues" evidence="3">
    <location>
        <begin position="1"/>
        <end position="15"/>
    </location>
</feature>
<feature type="compositionally biased region" description="Basic residues" evidence="3">
    <location>
        <begin position="16"/>
        <end position="31"/>
    </location>
</feature>
<feature type="active site" description="Proton donor/acceptor" evidence="1">
    <location>
        <position position="242"/>
    </location>
</feature>
<feature type="binding site" evidence="1">
    <location>
        <begin position="209"/>
        <end position="211"/>
    </location>
    <ligand>
        <name>acetyl-CoA</name>
        <dbReference type="ChEBI" id="CHEBI:57288"/>
    </ligand>
</feature>
<feature type="binding site" evidence="1">
    <location>
        <begin position="216"/>
        <end position="222"/>
    </location>
    <ligand>
        <name>acetyl-CoA</name>
        <dbReference type="ChEBI" id="CHEBI:57288"/>
    </ligand>
</feature>
<feature type="binding site" evidence="1">
    <location>
        <position position="246"/>
    </location>
    <ligand>
        <name>acetyl-CoA</name>
        <dbReference type="ChEBI" id="CHEBI:57288"/>
    </ligand>
</feature>
<feature type="binding site" evidence="1">
    <location>
        <position position="323"/>
    </location>
    <ligand>
        <name>acetyl-CoA</name>
        <dbReference type="ChEBI" id="CHEBI:57288"/>
    </ligand>
</feature>
<feature type="modified residue" description="N6-acetyllysine; by autocatalysis" evidence="10">
    <location>
        <position position="168"/>
    </location>
</feature>
<feature type="mutagenesis site" description="Loss of function." evidence="4 5">
    <original>C</original>
    <variation>L</variation>
    <location>
        <position position="106"/>
    </location>
</feature>
<feature type="mutagenesis site" description="Abolishes catalytic activity.">
    <original>K</original>
    <variation>A</variation>
    <variation>Q</variation>
    <variation>R</variation>
    <location>
        <position position="168"/>
    </location>
</feature>
<feature type="mutagenesis site" description="Loss of function." evidence="5">
    <original>PP</original>
    <variation>AV</variation>
    <location>
        <begin position="213"/>
        <end position="214"/>
    </location>
</feature>
<feature type="mutagenesis site" description="Abolishes silencing activity." evidence="4">
    <original>QR</original>
    <variation>AA</variation>
    <location>
        <begin position="216"/>
        <end position="217"/>
    </location>
</feature>
<feature type="mutagenesis site" description="Does not affect silencing activity." evidence="4">
    <original>GLG</original>
    <variation>AAA</variation>
    <location>
        <begin position="219"/>
        <end position="221"/>
    </location>
</feature>
<feature type="mutagenesis site" description="Does not affect silencing activity." evidence="4">
    <original>LI</original>
    <variation>AA</variation>
    <location>
        <begin position="224"/>
        <end position="225"/>
    </location>
</feature>
<proteinExistence type="evidence at protein level"/>
<gene>
    <name type="primary">SAS2</name>
    <name type="synonym">ESO1</name>
    <name type="ordered locus">YMR127C</name>
    <name type="ORF">YM9553.03C</name>
</gene>
<sequence>MARSLSQSLTATTQKLKGKKNGGKGKNKPSAKIKKTQKEMLYGILNERNIRQIQFGLNKKFSTWYGSAVYFDPETKRLGCSETKGQLSSVSNSQYWLDTLFVCEYCFKYTDDQTRFVGHVASCPFQYRVPGKIKYKSPEYTIRRVKGSKYQLFCQCLCLFTKLYLDNKSMYFKVDHYEFYIVYETGSTKPMGFFSKDLVSYQQNNLACILIFPPYQRRGLGLLLIEFSYKLSQLEGVISGPEVPLSPFGLIGYLKYWSQILCWHLIEGDLAHYDKVTLEDLSIVTGMRVNDVILTLKHLNCIGENNQIYLQSLNSWLKLHGTKRNWFKLKDEYLLIDD</sequence>
<keyword id="KW-0007">Acetylation</keyword>
<keyword id="KW-0012">Acyltransferase</keyword>
<keyword id="KW-0156">Chromatin regulator</keyword>
<keyword id="KW-0963">Cytoplasm</keyword>
<keyword id="KW-0479">Metal-binding</keyword>
<keyword id="KW-0539">Nucleus</keyword>
<keyword id="KW-1185">Reference proteome</keyword>
<keyword id="KW-0678">Repressor</keyword>
<keyword id="KW-0804">Transcription</keyword>
<keyword id="KW-0805">Transcription regulation</keyword>
<keyword id="KW-0808">Transferase</keyword>
<keyword id="KW-0862">Zinc</keyword>
<keyword id="KW-0863">Zinc-finger</keyword>
<dbReference type="EC" id="2.3.1.48" evidence="9"/>
<dbReference type="EMBL" id="U14548">
    <property type="protein sequence ID" value="AAA21555.1"/>
    <property type="molecule type" value="Genomic_DNA"/>
</dbReference>
<dbReference type="EMBL" id="Z48622">
    <property type="protein sequence ID" value="CAA88552.1"/>
    <property type="molecule type" value="Genomic_DNA"/>
</dbReference>
<dbReference type="EMBL" id="BK006946">
    <property type="protein sequence ID" value="DAA10024.1"/>
    <property type="molecule type" value="Genomic_DNA"/>
</dbReference>
<dbReference type="PIR" id="S48299">
    <property type="entry name" value="S48299"/>
</dbReference>
<dbReference type="RefSeq" id="NP_013846.1">
    <property type="nucleotide sequence ID" value="NM_001182628.1"/>
</dbReference>
<dbReference type="SMR" id="P40963"/>
<dbReference type="BioGRID" id="35304">
    <property type="interactions" value="155"/>
</dbReference>
<dbReference type="ComplexPortal" id="CPX-777">
    <property type="entry name" value="SAS acetyltransferase complex"/>
</dbReference>
<dbReference type="DIP" id="DIP-4601N"/>
<dbReference type="FunCoup" id="P40963">
    <property type="interactions" value="350"/>
</dbReference>
<dbReference type="IntAct" id="P40963">
    <property type="interactions" value="7"/>
</dbReference>
<dbReference type="MINT" id="P40963"/>
<dbReference type="STRING" id="4932.YMR127C"/>
<dbReference type="ChEMBL" id="CHEMBL3832953"/>
<dbReference type="iPTMnet" id="P40963"/>
<dbReference type="PaxDb" id="4932-YMR127C"/>
<dbReference type="PeptideAtlas" id="P40963"/>
<dbReference type="EnsemblFungi" id="YMR127C_mRNA">
    <property type="protein sequence ID" value="YMR127C"/>
    <property type="gene ID" value="YMR127C"/>
</dbReference>
<dbReference type="GeneID" id="855157"/>
<dbReference type="KEGG" id="sce:YMR127C"/>
<dbReference type="AGR" id="SGD:S000004734"/>
<dbReference type="SGD" id="S000004734">
    <property type="gene designation" value="SAS2"/>
</dbReference>
<dbReference type="VEuPathDB" id="FungiDB:YMR127C"/>
<dbReference type="eggNOG" id="KOG2747">
    <property type="taxonomic scope" value="Eukaryota"/>
</dbReference>
<dbReference type="HOGENOM" id="CLU_011815_0_2_1"/>
<dbReference type="InParanoid" id="P40963"/>
<dbReference type="OMA" id="LDNKSMY"/>
<dbReference type="OrthoDB" id="787137at2759"/>
<dbReference type="BioCyc" id="YEAST:G3O-32820-MONOMER"/>
<dbReference type="BioGRID-ORCS" id="855157">
    <property type="hits" value="0 hits in 10 CRISPR screens"/>
</dbReference>
<dbReference type="PRO" id="PR:P40963"/>
<dbReference type="Proteomes" id="UP000002311">
    <property type="component" value="Chromosome XIII"/>
</dbReference>
<dbReference type="RNAct" id="P40963">
    <property type="molecule type" value="protein"/>
</dbReference>
<dbReference type="GO" id="GO:0000785">
    <property type="term" value="C:chromatin"/>
    <property type="evidence" value="ECO:0000314"/>
    <property type="project" value="SGD"/>
</dbReference>
<dbReference type="GO" id="GO:0000781">
    <property type="term" value="C:chromosome, telomeric region"/>
    <property type="evidence" value="ECO:0007669"/>
    <property type="project" value="GOC"/>
</dbReference>
<dbReference type="GO" id="GO:0005737">
    <property type="term" value="C:cytoplasm"/>
    <property type="evidence" value="ECO:0007669"/>
    <property type="project" value="UniProtKB-SubCell"/>
</dbReference>
<dbReference type="GO" id="GO:0035267">
    <property type="term" value="C:NuA4 histone acetyltransferase complex"/>
    <property type="evidence" value="ECO:0000318"/>
    <property type="project" value="GO_Central"/>
</dbReference>
<dbReference type="GO" id="GO:0005634">
    <property type="term" value="C:nucleus"/>
    <property type="evidence" value="ECO:0007669"/>
    <property type="project" value="UniProtKB-SubCell"/>
</dbReference>
<dbReference type="GO" id="GO:0033255">
    <property type="term" value="C:SAS acetyltransferase complex"/>
    <property type="evidence" value="ECO:0000314"/>
    <property type="project" value="SGD"/>
</dbReference>
<dbReference type="GO" id="GO:0016407">
    <property type="term" value="F:acetyltransferase activity"/>
    <property type="evidence" value="ECO:0000314"/>
    <property type="project" value="SGD"/>
</dbReference>
<dbReference type="GO" id="GO:0004402">
    <property type="term" value="F:histone acetyltransferase activity"/>
    <property type="evidence" value="ECO:0000314"/>
    <property type="project" value="SGD"/>
</dbReference>
<dbReference type="GO" id="GO:0046972">
    <property type="term" value="F:histone H4K16 acetyltransferase activity"/>
    <property type="evidence" value="ECO:0000318"/>
    <property type="project" value="GO_Central"/>
</dbReference>
<dbReference type="GO" id="GO:0008270">
    <property type="term" value="F:zinc ion binding"/>
    <property type="evidence" value="ECO:0007669"/>
    <property type="project" value="UniProtKB-KW"/>
</dbReference>
<dbReference type="GO" id="GO:0006355">
    <property type="term" value="P:regulation of DNA-templated transcription"/>
    <property type="evidence" value="ECO:0007669"/>
    <property type="project" value="InterPro"/>
</dbReference>
<dbReference type="GO" id="GO:0030466">
    <property type="term" value="P:silent mating-type cassette heterochromatin formation"/>
    <property type="evidence" value="ECO:0000315"/>
    <property type="project" value="SGD"/>
</dbReference>
<dbReference type="GO" id="GO:0031509">
    <property type="term" value="P:subtelomeric heterochromatin formation"/>
    <property type="evidence" value="ECO:0000314"/>
    <property type="project" value="SGD"/>
</dbReference>
<dbReference type="FunFam" id="1.10.10.10:FF:000751">
    <property type="entry name" value="Histone acetyltransferase"/>
    <property type="match status" value="1"/>
</dbReference>
<dbReference type="FunFam" id="3.30.60.60:FF:000008">
    <property type="entry name" value="Histone acetyltransferase"/>
    <property type="match status" value="1"/>
</dbReference>
<dbReference type="FunFam" id="3.40.630.30:FF:000067">
    <property type="entry name" value="Histone acetyltransferase"/>
    <property type="match status" value="1"/>
</dbReference>
<dbReference type="Gene3D" id="3.40.630.30">
    <property type="match status" value="1"/>
</dbReference>
<dbReference type="Gene3D" id="3.30.60.60">
    <property type="entry name" value="N-acetyl transferase-like"/>
    <property type="match status" value="1"/>
</dbReference>
<dbReference type="Gene3D" id="1.10.10.10">
    <property type="entry name" value="Winged helix-like DNA-binding domain superfamily/Winged helix DNA-binding domain"/>
    <property type="match status" value="1"/>
</dbReference>
<dbReference type="InterPro" id="IPR016181">
    <property type="entry name" value="Acyl_CoA_acyltransferase"/>
</dbReference>
<dbReference type="InterPro" id="IPR002717">
    <property type="entry name" value="HAT_MYST-type"/>
</dbReference>
<dbReference type="InterPro" id="IPR050603">
    <property type="entry name" value="MYST_HAT"/>
</dbReference>
<dbReference type="InterPro" id="IPR036388">
    <property type="entry name" value="WH-like_DNA-bd_sf"/>
</dbReference>
<dbReference type="PANTHER" id="PTHR10615">
    <property type="entry name" value="HISTONE ACETYLTRANSFERASE"/>
    <property type="match status" value="1"/>
</dbReference>
<dbReference type="PANTHER" id="PTHR10615:SF219">
    <property type="entry name" value="HISTONE ACETYLTRANSFERASE KAT5"/>
    <property type="match status" value="1"/>
</dbReference>
<dbReference type="Pfam" id="PF01853">
    <property type="entry name" value="MOZ_SAS"/>
    <property type="match status" value="1"/>
</dbReference>
<dbReference type="SUPFAM" id="SSF55729">
    <property type="entry name" value="Acyl-CoA N-acyltransferases (Nat)"/>
    <property type="match status" value="1"/>
</dbReference>
<dbReference type="PROSITE" id="PS51726">
    <property type="entry name" value="MYST_HAT"/>
    <property type="match status" value="1"/>
</dbReference>
<comment type="function">
    <text evidence="6 9">Histone acetyltransferase (HAT) subunit of the SAS complex, a multiprotein complex that acetylates 'Lys-16' of histone H4 and 'Lys-14' of histone H3. The SAS complex is however unable to acetylate nucleosomal histones. The complex is involved in transcriptional silencing at telomeres and at HML locus. Also involved in rDNA silencing and G0 control.</text>
</comment>
<comment type="catalytic activity">
    <reaction evidence="9">
        <text>L-lysyl-[protein] + acetyl-CoA = N(6)-acetyl-L-lysyl-[protein] + CoA + H(+)</text>
        <dbReference type="Rhea" id="RHEA:45948"/>
        <dbReference type="Rhea" id="RHEA-COMP:9752"/>
        <dbReference type="Rhea" id="RHEA-COMP:10731"/>
        <dbReference type="ChEBI" id="CHEBI:15378"/>
        <dbReference type="ChEBI" id="CHEBI:29969"/>
        <dbReference type="ChEBI" id="CHEBI:57287"/>
        <dbReference type="ChEBI" id="CHEBI:57288"/>
        <dbReference type="ChEBI" id="CHEBI:61930"/>
        <dbReference type="EC" id="2.3.1.48"/>
    </reaction>
</comment>
<comment type="subunit">
    <text evidence="5 10">Interacts with CAC1. Component of the SAS complex, at least composed of SAS2, SAS4 and SAS5. These three proteins constitute the core of the complex and are sufficient to acetylate histones. SAS4 is essential for HAT activity of the complex, while SAS5 is required for maxiaml HAT activity.</text>
</comment>
<comment type="interaction">
    <interactant intactId="EBI-16476">
        <id>P40963</id>
    </interactant>
    <interactant intactId="EBI-3003">
        <id>P32447</id>
        <label>ASF1</label>
    </interactant>
    <organismsDiffer>false</organismsDiffer>
    <experiments>4</experiments>
</comment>
<comment type="interaction">
    <interactant intactId="EBI-16476">
        <id>P40963</id>
    </interactant>
    <interactant intactId="EBI-3913">
        <id>Q12495</id>
        <label>RLF2</label>
    </interactant>
    <organismsDiffer>false</organismsDiffer>
    <experiments>4</experiments>
</comment>
<comment type="interaction">
    <interactant intactId="EBI-16476">
        <id>P40963</id>
    </interactant>
    <interactant intactId="EBI-38500">
        <id>Q04003</id>
        <label>SAS4</label>
    </interactant>
    <organismsDiffer>false</organismsDiffer>
    <experiments>8</experiments>
</comment>
<comment type="subcellular location">
    <subcellularLocation>
        <location evidence="7">Cytoplasm</location>
    </subcellularLocation>
    <subcellularLocation>
        <location evidence="7">Nucleus</location>
    </subcellularLocation>
</comment>
<comment type="PTM">
    <text evidence="10">Autoacetylation at Lys-168 is required for proper function.</text>
</comment>
<comment type="disruption phenotype">
    <text evidence="8">Heterochromatin spreading downstream of the silent mating-type locus HMR.</text>
</comment>
<comment type="similarity">
    <text evidence="11">Belongs to the MYST (SAS/MOZ) family.</text>
</comment>
<name>SAS2_YEAST</name>